<gene>
    <name type="primary">waaA</name>
    <name type="synonym">kdtA</name>
    <name type="ordered locus">Z5057</name>
    <name type="ordered locus">ECs4508</name>
</gene>
<organism>
    <name type="scientific">Escherichia coli O157:H7</name>
    <dbReference type="NCBI Taxonomy" id="83334"/>
    <lineage>
        <taxon>Bacteria</taxon>
        <taxon>Pseudomonadati</taxon>
        <taxon>Pseudomonadota</taxon>
        <taxon>Gammaproteobacteria</taxon>
        <taxon>Enterobacterales</taxon>
        <taxon>Enterobacteriaceae</taxon>
        <taxon>Escherichia</taxon>
    </lineage>
</organism>
<protein>
    <recommendedName>
        <fullName>3-deoxy-D-manno-octulosonic acid transferase</fullName>
        <shortName>Kdo transferase</shortName>
        <ecNumber>2.4.99.12</ecNumber>
        <ecNumber>2.4.99.13</ecNumber>
    </recommendedName>
    <alternativeName>
        <fullName>Bifunctional Kdo transferase</fullName>
    </alternativeName>
    <alternativeName>
        <fullName>Kdo-lipid IV(A) 3-deoxy-D-manno-octulosonic acid transferase</fullName>
    </alternativeName>
    <alternativeName>
        <fullName>Lipid IV(A) 3-deoxy-D-manno-octulosonic acid transferase</fullName>
    </alternativeName>
</protein>
<keyword id="KW-0997">Cell inner membrane</keyword>
<keyword id="KW-1003">Cell membrane</keyword>
<keyword id="KW-0448">Lipopolysaccharide biosynthesis</keyword>
<keyword id="KW-0472">Membrane</keyword>
<keyword id="KW-1185">Reference proteome</keyword>
<keyword id="KW-0735">Signal-anchor</keyword>
<keyword id="KW-0808">Transferase</keyword>
<keyword id="KW-0812">Transmembrane</keyword>
<keyword id="KW-1133">Transmembrane helix</keyword>
<proteinExistence type="inferred from homology"/>
<feature type="chain" id="PRO_0000080287" description="3-deoxy-D-manno-octulosonic acid transferase">
    <location>
        <begin position="1"/>
        <end position="425"/>
    </location>
</feature>
<feature type="transmembrane region" description="Helical; Signal-anchor" evidence="3">
    <location>
        <begin position="3"/>
        <end position="23"/>
    </location>
</feature>
<feature type="active site" description="Proton acceptor" evidence="1">
    <location>
        <position position="60"/>
    </location>
</feature>
<feature type="binding site" evidence="1">
    <location>
        <begin position="268"/>
        <end position="269"/>
    </location>
    <ligand>
        <name>CMP</name>
        <dbReference type="ChEBI" id="CHEBI:60377"/>
    </ligand>
</feature>
<feature type="binding site" evidence="1">
    <location>
        <begin position="309"/>
        <end position="311"/>
    </location>
    <ligand>
        <name>CMP</name>
        <dbReference type="ChEBI" id="CHEBI:60377"/>
    </ligand>
</feature>
<feature type="binding site" evidence="1">
    <location>
        <begin position="335"/>
        <end position="338"/>
    </location>
    <ligand>
        <name>CMP</name>
        <dbReference type="ChEBI" id="CHEBI:60377"/>
    </ligand>
</feature>
<feature type="site" description="Transition state stabilizer" evidence="1">
    <location>
        <position position="130"/>
    </location>
</feature>
<feature type="site" description="Transition state stabilizer" evidence="1">
    <location>
        <position position="208"/>
    </location>
</feature>
<sequence length="425" mass="47291">MLELLYTALLYLIQPLIWIRLWVRGRKAPAYRKRWGERYGFYRHPLKPGGIMLHSVSVGETLAAIPLVRALRHRYPDLPITVTTMTPTGSERVQSAFGKDVQHVYLPYDLPDALNRFLNKVDPKLVLIMETELWPNLIAALHKRKIPLVIANARLSARSAAGYAKLGKFVRRLLRRITLIAAQNEEDGARFVALGAKNNQVTVTGSLKFDISVTPQLAAKAVTLRRQWAPHRPVWIATSTHEGEESVVIAAHQALLQQFPNLLLILVPRHPERFPDAINLVRQAGLSYITRSSGEVPSTSTQVVVGDTMGELMLLYGIADLAFVGGSLVERGGHNPLEAAAHAIPVLMGPHTFNFKDICARLEQASGLITVTDATTLAKEVSSLLTDADYRSFYGRHAVEVLYQNQGALQRLLQLLEPYLPPKTH</sequence>
<comment type="function">
    <text evidence="2">Involved in lipopolysaccharide (LPS) biosynthesis. Catalyzes the transfer of two 3-deoxy-D-manno-octulosonate (Kdo) residues from CMP-Kdo to lipid IV(A), the tetraacyldisaccharide-1,4'-bisphosphate precursor of lipid A.</text>
</comment>
<comment type="catalytic activity">
    <reaction>
        <text>lipid IVA (E. coli) + CMP-3-deoxy-beta-D-manno-octulosonate = alpha-Kdo-(2-&gt;6)-lipid IVA (E. coli) + CMP + H(+)</text>
        <dbReference type="Rhea" id="RHEA:28066"/>
        <dbReference type="ChEBI" id="CHEBI:15378"/>
        <dbReference type="ChEBI" id="CHEBI:58603"/>
        <dbReference type="ChEBI" id="CHEBI:60364"/>
        <dbReference type="ChEBI" id="CHEBI:60377"/>
        <dbReference type="ChEBI" id="CHEBI:85987"/>
        <dbReference type="EC" id="2.4.99.12"/>
    </reaction>
</comment>
<comment type="catalytic activity">
    <reaction>
        <text>alpha-Kdo-(2-&gt;6)-lipid IVA (E. coli) + CMP-3-deoxy-beta-D-manno-octulosonate = alpha-Kdo-(2-&gt;4)-alpha-Kdo-(2-&gt;6)-lipid IVA (E. coli) + CMP + H(+)</text>
        <dbReference type="Rhea" id="RHEA:28062"/>
        <dbReference type="ChEBI" id="CHEBI:15378"/>
        <dbReference type="ChEBI" id="CHEBI:60364"/>
        <dbReference type="ChEBI" id="CHEBI:60365"/>
        <dbReference type="ChEBI" id="CHEBI:60377"/>
        <dbReference type="ChEBI" id="CHEBI:85987"/>
        <dbReference type="EC" id="2.4.99.13"/>
    </reaction>
</comment>
<comment type="pathway">
    <text>Glycolipid biosynthesis; KDO(2)-lipid A biosynthesis; KDO(2)-lipid A from CMP-3-deoxy-D-manno-octulosonate and lipid IV(A): step 1/4.</text>
</comment>
<comment type="pathway">
    <text>Glycolipid biosynthesis; KDO(2)-lipid A biosynthesis; KDO(2)-lipid A from CMP-3-deoxy-D-manno-octulosonate and lipid IV(A): step 2/4.</text>
</comment>
<comment type="pathway">
    <text>Bacterial outer membrane biogenesis; LPS core biosynthesis.</text>
</comment>
<comment type="subcellular location">
    <subcellularLocation>
        <location evidence="1">Cell inner membrane</location>
        <topology evidence="1">Single-pass membrane protein</topology>
        <orientation evidence="1">Cytoplasmic side</orientation>
    </subcellularLocation>
</comment>
<comment type="similarity">
    <text evidence="4">Belongs to the glycosyltransferase group 1 family. Glycosyltransferase 30 subfamily.</text>
</comment>
<accession>P0AC77</accession>
<accession>P23282</accession>
<evidence type="ECO:0000250" key="1"/>
<evidence type="ECO:0000250" key="2">
    <source>
        <dbReference type="UniProtKB" id="P0AC75"/>
    </source>
</evidence>
<evidence type="ECO:0000255" key="3"/>
<evidence type="ECO:0000305" key="4"/>
<name>KDTA_ECO57</name>
<dbReference type="EC" id="2.4.99.12"/>
<dbReference type="EC" id="2.4.99.13"/>
<dbReference type="EMBL" id="AE005174">
    <property type="protein sequence ID" value="AAG58777.1"/>
    <property type="molecule type" value="Genomic_DNA"/>
</dbReference>
<dbReference type="EMBL" id="BA000007">
    <property type="protein sequence ID" value="BAB37931.1"/>
    <property type="molecule type" value="Genomic_DNA"/>
</dbReference>
<dbReference type="PIR" id="D98192">
    <property type="entry name" value="D98192"/>
</dbReference>
<dbReference type="RefSeq" id="NP_312535.1">
    <property type="nucleotide sequence ID" value="NC_002695.1"/>
</dbReference>
<dbReference type="RefSeq" id="WP_000891564.1">
    <property type="nucleotide sequence ID" value="NZ_VOAI01000021.1"/>
</dbReference>
<dbReference type="SMR" id="P0AC77"/>
<dbReference type="STRING" id="155864.Z5057"/>
<dbReference type="GeneID" id="915541"/>
<dbReference type="GeneID" id="93778346"/>
<dbReference type="KEGG" id="ece:Z5057"/>
<dbReference type="KEGG" id="ecs:ECs_4508"/>
<dbReference type="PATRIC" id="fig|386585.9.peg.4724"/>
<dbReference type="eggNOG" id="COG1519">
    <property type="taxonomic scope" value="Bacteria"/>
</dbReference>
<dbReference type="HOGENOM" id="CLU_036146_2_0_6"/>
<dbReference type="OMA" id="FIKYEFW"/>
<dbReference type="UniPathway" id="UPA00360">
    <property type="reaction ID" value="UER00483"/>
</dbReference>
<dbReference type="UniPathway" id="UPA00360">
    <property type="reaction ID" value="UER00484"/>
</dbReference>
<dbReference type="UniPathway" id="UPA00958"/>
<dbReference type="Proteomes" id="UP000000558">
    <property type="component" value="Chromosome"/>
</dbReference>
<dbReference type="Proteomes" id="UP000002519">
    <property type="component" value="Chromosome"/>
</dbReference>
<dbReference type="GO" id="GO:0005886">
    <property type="term" value="C:plasma membrane"/>
    <property type="evidence" value="ECO:0007669"/>
    <property type="project" value="UniProtKB-SubCell"/>
</dbReference>
<dbReference type="GO" id="GO:0043842">
    <property type="term" value="F:Kdo transferase activity"/>
    <property type="evidence" value="ECO:0007669"/>
    <property type="project" value="UniProtKB-EC"/>
</dbReference>
<dbReference type="GO" id="GO:0036104">
    <property type="term" value="P:Kdo2-lipid A biosynthetic process"/>
    <property type="evidence" value="ECO:0007669"/>
    <property type="project" value="UniProtKB-UniPathway"/>
</dbReference>
<dbReference type="GO" id="GO:0009245">
    <property type="term" value="P:lipid A biosynthetic process"/>
    <property type="evidence" value="ECO:0007669"/>
    <property type="project" value="TreeGrafter"/>
</dbReference>
<dbReference type="GO" id="GO:0009244">
    <property type="term" value="P:lipopolysaccharide core region biosynthetic process"/>
    <property type="evidence" value="ECO:0007669"/>
    <property type="project" value="UniProtKB-UniPathway"/>
</dbReference>
<dbReference type="FunFam" id="3.40.50.11720:FF:000001">
    <property type="entry name" value="3-deoxy-D-manno-octulosonic acid transferase"/>
    <property type="match status" value="1"/>
</dbReference>
<dbReference type="FunFam" id="3.40.50.2000:FF:000032">
    <property type="entry name" value="3-deoxy-D-manno-octulosonic acid transferase"/>
    <property type="match status" value="1"/>
</dbReference>
<dbReference type="Gene3D" id="3.40.50.11720">
    <property type="entry name" value="3-Deoxy-D-manno-octulosonic-acid transferase, N-terminal domain"/>
    <property type="match status" value="1"/>
</dbReference>
<dbReference type="Gene3D" id="3.40.50.2000">
    <property type="entry name" value="Glycogen Phosphorylase B"/>
    <property type="match status" value="1"/>
</dbReference>
<dbReference type="InterPro" id="IPR001296">
    <property type="entry name" value="Glyco_trans_1"/>
</dbReference>
<dbReference type="InterPro" id="IPR007507">
    <property type="entry name" value="Glycos_transf_N"/>
</dbReference>
<dbReference type="InterPro" id="IPR038107">
    <property type="entry name" value="Glycos_transf_N_sf"/>
</dbReference>
<dbReference type="InterPro" id="IPR039901">
    <property type="entry name" value="Kdotransferase"/>
</dbReference>
<dbReference type="NCBIfam" id="NF004385">
    <property type="entry name" value="PRK05749.1-1"/>
    <property type="match status" value="1"/>
</dbReference>
<dbReference type="NCBIfam" id="NF004388">
    <property type="entry name" value="PRK05749.1-4"/>
    <property type="match status" value="1"/>
</dbReference>
<dbReference type="PANTHER" id="PTHR42755:SF1">
    <property type="entry name" value="3-DEOXY-D-MANNO-OCTULOSONIC ACID TRANSFERASE, MITOCHONDRIAL-RELATED"/>
    <property type="match status" value="1"/>
</dbReference>
<dbReference type="PANTHER" id="PTHR42755">
    <property type="entry name" value="3-DEOXY-MANNO-OCTULOSONATE CYTIDYLYLTRANSFERASE"/>
    <property type="match status" value="1"/>
</dbReference>
<dbReference type="Pfam" id="PF00534">
    <property type="entry name" value="Glycos_transf_1"/>
    <property type="match status" value="1"/>
</dbReference>
<dbReference type="Pfam" id="PF04413">
    <property type="entry name" value="Glycos_transf_N"/>
    <property type="match status" value="1"/>
</dbReference>
<dbReference type="SUPFAM" id="SSF53756">
    <property type="entry name" value="UDP-Glycosyltransferase/glycogen phosphorylase"/>
    <property type="match status" value="1"/>
</dbReference>
<reference key="1">
    <citation type="journal article" date="2001" name="Nature">
        <title>Genome sequence of enterohaemorrhagic Escherichia coli O157:H7.</title>
        <authorList>
            <person name="Perna N.T."/>
            <person name="Plunkett G. III"/>
            <person name="Burland V."/>
            <person name="Mau B."/>
            <person name="Glasner J.D."/>
            <person name="Rose D.J."/>
            <person name="Mayhew G.F."/>
            <person name="Evans P.S."/>
            <person name="Gregor J."/>
            <person name="Kirkpatrick H.A."/>
            <person name="Posfai G."/>
            <person name="Hackett J."/>
            <person name="Klink S."/>
            <person name="Boutin A."/>
            <person name="Shao Y."/>
            <person name="Miller L."/>
            <person name="Grotbeck E.J."/>
            <person name="Davis N.W."/>
            <person name="Lim A."/>
            <person name="Dimalanta E.T."/>
            <person name="Potamousis K."/>
            <person name="Apodaca J."/>
            <person name="Anantharaman T.S."/>
            <person name="Lin J."/>
            <person name="Yen G."/>
            <person name="Schwartz D.C."/>
            <person name="Welch R.A."/>
            <person name="Blattner F.R."/>
        </authorList>
    </citation>
    <scope>NUCLEOTIDE SEQUENCE [LARGE SCALE GENOMIC DNA]</scope>
    <source>
        <strain>O157:H7 / EDL933 / ATCC 700927 / EHEC</strain>
    </source>
</reference>
<reference key="2">
    <citation type="journal article" date="2001" name="DNA Res.">
        <title>Complete genome sequence of enterohemorrhagic Escherichia coli O157:H7 and genomic comparison with a laboratory strain K-12.</title>
        <authorList>
            <person name="Hayashi T."/>
            <person name="Makino K."/>
            <person name="Ohnishi M."/>
            <person name="Kurokawa K."/>
            <person name="Ishii K."/>
            <person name="Yokoyama K."/>
            <person name="Han C.-G."/>
            <person name="Ohtsubo E."/>
            <person name="Nakayama K."/>
            <person name="Murata T."/>
            <person name="Tanaka M."/>
            <person name="Tobe T."/>
            <person name="Iida T."/>
            <person name="Takami H."/>
            <person name="Honda T."/>
            <person name="Sasakawa C."/>
            <person name="Ogasawara N."/>
            <person name="Yasunaga T."/>
            <person name="Kuhara S."/>
            <person name="Shiba T."/>
            <person name="Hattori M."/>
            <person name="Shinagawa H."/>
        </authorList>
    </citation>
    <scope>NUCLEOTIDE SEQUENCE [LARGE SCALE GENOMIC DNA]</scope>
    <source>
        <strain>O157:H7 / Sakai / RIMD 0509952 / EHEC</strain>
    </source>
</reference>